<sequence length="180" mass="20216">MASSMLSSATMVASPAQATMVAPFNGLKSSAAFPATRKANNDITSITSNGGRVNCMQVWPPIGKKKFETLSYLPDLTDSELAKEVDYLIRNKWIPCVEFELEHGFVYREHGNSPGYYDGRYWTMWKLPLFGCTDSAQVLKEVEECKKEYPNAFIRIIGFDNTRQVQCISFIAYKPPSFTG</sequence>
<organism>
    <name type="scientific">Arabidopsis thaliana</name>
    <name type="common">Mouse-ear cress</name>
    <dbReference type="NCBI Taxonomy" id="3702"/>
    <lineage>
        <taxon>Eukaryota</taxon>
        <taxon>Viridiplantae</taxon>
        <taxon>Streptophyta</taxon>
        <taxon>Embryophyta</taxon>
        <taxon>Tracheophyta</taxon>
        <taxon>Spermatophyta</taxon>
        <taxon>Magnoliopsida</taxon>
        <taxon>eudicotyledons</taxon>
        <taxon>Gunneridae</taxon>
        <taxon>Pentapetalae</taxon>
        <taxon>rosids</taxon>
        <taxon>malvids</taxon>
        <taxon>Brassicales</taxon>
        <taxon>Brassicaceae</taxon>
        <taxon>Camelineae</taxon>
        <taxon>Arabidopsis</taxon>
    </lineage>
</organism>
<name>RBS1A_ARATH</name>
<gene>
    <name type="primary">RBCS-1A</name>
    <name type="synonym">ATS1A</name>
    <name type="ordered locus">At1g67090</name>
    <name type="ORF">F1O19.14</name>
    <name type="ORF">F5A8.1</name>
</gene>
<feature type="transit peptide" description="Chloroplast" evidence="1">
    <location>
        <begin position="1"/>
        <end position="54"/>
    </location>
</feature>
<feature type="chain" id="PRO_0000031463" description="Ribulose bisphosphate carboxylase small subunit 1A, chloroplastic" evidence="1">
    <location>
        <begin position="55"/>
        <end position="180"/>
    </location>
</feature>
<feature type="modified residue" description="Phosphoserine" evidence="5">
    <location>
        <position position="113"/>
    </location>
</feature>
<feature type="sequence conflict" description="In Ref. 4; AAG40356." evidence="4" ref="4">
    <original>G</original>
    <variation>R</variation>
    <location>
        <position position="115"/>
    </location>
</feature>
<feature type="sequence conflict" description="In Ref. 1; CAA31948." evidence="4" ref="1">
    <original>I</original>
    <variation>V</variation>
    <location>
        <position position="171"/>
    </location>
</feature>
<dbReference type="EMBL" id="X13611">
    <property type="protein sequence ID" value="CAA31948.1"/>
    <property type="status" value="ALT_SEQ"/>
    <property type="molecule type" value="Genomic_DNA"/>
</dbReference>
<dbReference type="EMBL" id="AC004146">
    <property type="protein sequence ID" value="AAD10655.1"/>
    <property type="molecule type" value="Genomic_DNA"/>
</dbReference>
<dbReference type="EMBL" id="AC007152">
    <property type="status" value="NOT_ANNOTATED_CDS"/>
    <property type="molecule type" value="Genomic_DNA"/>
</dbReference>
<dbReference type="EMBL" id="CP002684">
    <property type="protein sequence ID" value="AEE34594.1"/>
    <property type="molecule type" value="Genomic_DNA"/>
</dbReference>
<dbReference type="EMBL" id="AF325011">
    <property type="protein sequence ID" value="AAG40363.1"/>
    <property type="molecule type" value="mRNA"/>
</dbReference>
<dbReference type="EMBL" id="AF325004">
    <property type="protein sequence ID" value="AAG40356.1"/>
    <property type="molecule type" value="mRNA"/>
</dbReference>
<dbReference type="EMBL" id="AF372874">
    <property type="protein sequence ID" value="AAK49590.1"/>
    <property type="status" value="ALT_INIT"/>
    <property type="molecule type" value="mRNA"/>
</dbReference>
<dbReference type="EMBL" id="AF410291">
    <property type="protein sequence ID" value="AAK95277.1"/>
    <property type="molecule type" value="mRNA"/>
</dbReference>
<dbReference type="EMBL" id="AY054188">
    <property type="protein sequence ID" value="AAL06849.1"/>
    <property type="molecule type" value="mRNA"/>
</dbReference>
<dbReference type="EMBL" id="AY054581">
    <property type="protein sequence ID" value="AAK96772.1"/>
    <property type="molecule type" value="mRNA"/>
</dbReference>
<dbReference type="EMBL" id="AY058831">
    <property type="protein sequence ID" value="AAL24219.1"/>
    <property type="molecule type" value="mRNA"/>
</dbReference>
<dbReference type="EMBL" id="AY059940">
    <property type="protein sequence ID" value="AAL24422.1"/>
    <property type="molecule type" value="mRNA"/>
</dbReference>
<dbReference type="EMBL" id="AY062612">
    <property type="protein sequence ID" value="AAL32690.1"/>
    <property type="molecule type" value="mRNA"/>
</dbReference>
<dbReference type="EMBL" id="AY062711">
    <property type="protein sequence ID" value="AAL32789.1"/>
    <property type="molecule type" value="mRNA"/>
</dbReference>
<dbReference type="EMBL" id="AY065101">
    <property type="protein sequence ID" value="AAL38277.1"/>
    <property type="molecule type" value="mRNA"/>
</dbReference>
<dbReference type="EMBL" id="AY093380">
    <property type="protein sequence ID" value="AAM13379.1"/>
    <property type="molecule type" value="mRNA"/>
</dbReference>
<dbReference type="EMBL" id="AY093388">
    <property type="protein sequence ID" value="AAM13387.1"/>
    <property type="molecule type" value="mRNA"/>
</dbReference>
<dbReference type="EMBL" id="AY097366">
    <property type="protein sequence ID" value="AAM19882.1"/>
    <property type="molecule type" value="mRNA"/>
</dbReference>
<dbReference type="EMBL" id="BT000362">
    <property type="protein sequence ID" value="AAN15681.1"/>
    <property type="molecule type" value="mRNA"/>
</dbReference>
<dbReference type="EMBL" id="BT002076">
    <property type="protein sequence ID" value="AAN72087.1"/>
    <property type="molecule type" value="mRNA"/>
</dbReference>
<dbReference type="EMBL" id="AK226468">
    <property type="protein sequence ID" value="BAE98610.1"/>
    <property type="molecule type" value="mRNA"/>
</dbReference>
<dbReference type="EMBL" id="AK226776">
    <property type="protein sequence ID" value="BAE98874.1"/>
    <property type="molecule type" value="mRNA"/>
</dbReference>
<dbReference type="EMBL" id="AK226546">
    <property type="protein sequence ID" value="BAE98685.1"/>
    <property type="molecule type" value="mRNA"/>
</dbReference>
<dbReference type="EMBL" id="AK226565">
    <property type="protein sequence ID" value="BAE98695.1"/>
    <property type="molecule type" value="mRNA"/>
</dbReference>
<dbReference type="EMBL" id="X68342">
    <property type="protein sequence ID" value="CAA48415.1"/>
    <property type="status" value="ALT_TERM"/>
    <property type="molecule type" value="Other_DNA"/>
</dbReference>
<dbReference type="PIR" id="G96694">
    <property type="entry name" value="G96694"/>
</dbReference>
<dbReference type="PIR" id="S03720">
    <property type="entry name" value="RKMUA1"/>
</dbReference>
<dbReference type="RefSeq" id="NP_176880.1">
    <molecule id="P10795-1"/>
    <property type="nucleotide sequence ID" value="NM_105379.4"/>
</dbReference>
<dbReference type="SMR" id="P10795"/>
<dbReference type="BioGRID" id="28250">
    <property type="interactions" value="16"/>
</dbReference>
<dbReference type="FunCoup" id="P10795">
    <property type="interactions" value="1281"/>
</dbReference>
<dbReference type="IntAct" id="P10795">
    <property type="interactions" value="8"/>
</dbReference>
<dbReference type="MINT" id="P10795"/>
<dbReference type="STRING" id="3702.P10795"/>
<dbReference type="iPTMnet" id="P10795"/>
<dbReference type="PaxDb" id="3702-AT1G67090.1"/>
<dbReference type="ProteomicsDB" id="236530">
    <molecule id="P10795-1"/>
</dbReference>
<dbReference type="EnsemblPlants" id="AT1G67090.1">
    <molecule id="P10795-1"/>
    <property type="protein sequence ID" value="AT1G67090.1"/>
    <property type="gene ID" value="AT1G67090"/>
</dbReference>
<dbReference type="GeneID" id="843029"/>
<dbReference type="Gramene" id="AT1G67090.1">
    <molecule id="P10795-1"/>
    <property type="protein sequence ID" value="AT1G67090.1"/>
    <property type="gene ID" value="AT1G67090"/>
</dbReference>
<dbReference type="KEGG" id="ath:AT1G67090"/>
<dbReference type="Araport" id="AT1G67090"/>
<dbReference type="TAIR" id="AT1G67090">
    <property type="gene designation" value="RBCS1A"/>
</dbReference>
<dbReference type="eggNOG" id="ENOG502QT0M">
    <property type="taxonomic scope" value="Eukaryota"/>
</dbReference>
<dbReference type="HOGENOM" id="CLU_098114_1_0_1"/>
<dbReference type="InParanoid" id="P10795"/>
<dbReference type="OMA" id="LRSHWIP"/>
<dbReference type="OrthoDB" id="1029394at2759"/>
<dbReference type="PhylomeDB" id="P10795"/>
<dbReference type="BioCyc" id="MetaCyc:AT1G67090-MONOMER"/>
<dbReference type="CD-CODE" id="4299E36E">
    <property type="entry name" value="Nucleolus"/>
</dbReference>
<dbReference type="PRO" id="PR:P10795"/>
<dbReference type="Proteomes" id="UP000006548">
    <property type="component" value="Chromosome 1"/>
</dbReference>
<dbReference type="ExpressionAtlas" id="P10795">
    <property type="expression patterns" value="baseline and differential"/>
</dbReference>
<dbReference type="GO" id="GO:0048046">
    <property type="term" value="C:apoplast"/>
    <property type="evidence" value="ECO:0007005"/>
    <property type="project" value="TAIR"/>
</dbReference>
<dbReference type="GO" id="GO:0009507">
    <property type="term" value="C:chloroplast"/>
    <property type="evidence" value="ECO:0007005"/>
    <property type="project" value="TAIR"/>
</dbReference>
<dbReference type="GO" id="GO:0009941">
    <property type="term" value="C:chloroplast envelope"/>
    <property type="evidence" value="ECO:0007005"/>
    <property type="project" value="TAIR"/>
</dbReference>
<dbReference type="GO" id="GO:0031969">
    <property type="term" value="C:chloroplast membrane"/>
    <property type="evidence" value="ECO:0007669"/>
    <property type="project" value="UniProtKB-SubCell"/>
</dbReference>
<dbReference type="GO" id="GO:0009570">
    <property type="term" value="C:chloroplast stroma"/>
    <property type="evidence" value="ECO:0007005"/>
    <property type="project" value="TAIR"/>
</dbReference>
<dbReference type="GO" id="GO:0009535">
    <property type="term" value="C:chloroplast thylakoid membrane"/>
    <property type="evidence" value="ECO:0007005"/>
    <property type="project" value="TAIR"/>
</dbReference>
<dbReference type="GO" id="GO:0022626">
    <property type="term" value="C:cytosolic ribosome"/>
    <property type="evidence" value="ECO:0007005"/>
    <property type="project" value="TAIR"/>
</dbReference>
<dbReference type="GO" id="GO:0005739">
    <property type="term" value="C:mitochondrion"/>
    <property type="evidence" value="ECO:0007005"/>
    <property type="project" value="TAIR"/>
</dbReference>
<dbReference type="GO" id="GO:0009579">
    <property type="term" value="C:thylakoid"/>
    <property type="evidence" value="ECO:0007005"/>
    <property type="project" value="TAIR"/>
</dbReference>
<dbReference type="GO" id="GO:0031977">
    <property type="term" value="C:thylakoid lumen"/>
    <property type="evidence" value="ECO:0007005"/>
    <property type="project" value="TAIR"/>
</dbReference>
<dbReference type="GO" id="GO:0005507">
    <property type="term" value="F:copper ion binding"/>
    <property type="evidence" value="ECO:0007005"/>
    <property type="project" value="TAIR"/>
</dbReference>
<dbReference type="GO" id="GO:0003729">
    <property type="term" value="F:mRNA binding"/>
    <property type="evidence" value="ECO:0000314"/>
    <property type="project" value="TAIR"/>
</dbReference>
<dbReference type="GO" id="GO:0016984">
    <property type="term" value="F:ribulose-bisphosphate carboxylase activity"/>
    <property type="evidence" value="ECO:0007669"/>
    <property type="project" value="UniProtKB-UniRule"/>
</dbReference>
<dbReference type="GO" id="GO:1901149">
    <property type="term" value="F:salicylic acid binding"/>
    <property type="evidence" value="ECO:0007005"/>
    <property type="project" value="TAIR"/>
</dbReference>
<dbReference type="GO" id="GO:0009853">
    <property type="term" value="P:photorespiration"/>
    <property type="evidence" value="ECO:0007669"/>
    <property type="project" value="UniProtKB-KW"/>
</dbReference>
<dbReference type="GO" id="GO:0015979">
    <property type="term" value="P:photosynthesis"/>
    <property type="evidence" value="ECO:0000315"/>
    <property type="project" value="TAIR"/>
</dbReference>
<dbReference type="GO" id="GO:0019253">
    <property type="term" value="P:reductive pentose-phosphate cycle"/>
    <property type="evidence" value="ECO:0007669"/>
    <property type="project" value="UniProtKB-UniRule"/>
</dbReference>
<dbReference type="GO" id="GO:0009409">
    <property type="term" value="P:response to cold"/>
    <property type="evidence" value="ECO:0000270"/>
    <property type="project" value="TAIR"/>
</dbReference>
<dbReference type="GO" id="GO:0110102">
    <property type="term" value="P:ribulose bisphosphate carboxylase complex assembly"/>
    <property type="evidence" value="ECO:0000315"/>
    <property type="project" value="TAIR"/>
</dbReference>
<dbReference type="CDD" id="cd03527">
    <property type="entry name" value="RuBisCO_small"/>
    <property type="match status" value="1"/>
</dbReference>
<dbReference type="FunFam" id="3.30.190.10:FF:000001">
    <property type="entry name" value="Ribulose bisphosphate carboxylase small chain, chloroplastic"/>
    <property type="match status" value="1"/>
</dbReference>
<dbReference type="Gene3D" id="3.30.190.10">
    <property type="entry name" value="Ribulose bisphosphate carboxylase, small subunit"/>
    <property type="match status" value="1"/>
</dbReference>
<dbReference type="HAMAP" id="MF_00859">
    <property type="entry name" value="RuBisCO_S_bact"/>
    <property type="match status" value="1"/>
</dbReference>
<dbReference type="InterPro" id="IPR024681">
    <property type="entry name" value="RuBisCO_ssu"/>
</dbReference>
<dbReference type="InterPro" id="IPR000894">
    <property type="entry name" value="RuBisCO_ssu_dom"/>
</dbReference>
<dbReference type="InterPro" id="IPR024680">
    <property type="entry name" value="RuBisCO_ssu_N"/>
</dbReference>
<dbReference type="InterPro" id="IPR036385">
    <property type="entry name" value="RuBisCO_ssu_sf"/>
</dbReference>
<dbReference type="PANTHER" id="PTHR31262">
    <property type="entry name" value="RIBULOSE BISPHOSPHATE CARBOXYLASE SMALL CHAIN 1, CHLOROPLASTIC"/>
    <property type="match status" value="1"/>
</dbReference>
<dbReference type="PANTHER" id="PTHR31262:SF10">
    <property type="entry name" value="RIBULOSE BISPHOSPHATE CARBOXYLASE SMALL SUBUNIT 1A, CHLOROPLASTIC-RELATED"/>
    <property type="match status" value="1"/>
</dbReference>
<dbReference type="Pfam" id="PF12338">
    <property type="entry name" value="RbcS"/>
    <property type="match status" value="1"/>
</dbReference>
<dbReference type="Pfam" id="PF00101">
    <property type="entry name" value="RuBisCO_small"/>
    <property type="match status" value="1"/>
</dbReference>
<dbReference type="PRINTS" id="PR00152">
    <property type="entry name" value="RUBISCOSMALL"/>
</dbReference>
<dbReference type="SMART" id="SM00961">
    <property type="entry name" value="RuBisCO_small"/>
    <property type="match status" value="1"/>
</dbReference>
<dbReference type="SUPFAM" id="SSF55239">
    <property type="entry name" value="RuBisCO, small subunit"/>
    <property type="match status" value="1"/>
</dbReference>
<protein>
    <recommendedName>
        <fullName>Ribulose bisphosphate carboxylase small subunit 1A, chloroplastic</fullName>
        <shortName>RuBisCO small subunit 1A</shortName>
    </recommendedName>
</protein>
<evidence type="ECO:0000255" key="1">
    <source>
        <dbReference type="HAMAP-Rule" id="MF_00860"/>
    </source>
</evidence>
<evidence type="ECO:0000269" key="2">
    <source>
    </source>
</evidence>
<evidence type="ECO:0000269" key="3">
    <source>
    </source>
</evidence>
<evidence type="ECO:0000305" key="4"/>
<evidence type="ECO:0007744" key="5">
    <source>
    </source>
</evidence>
<comment type="function">
    <text evidence="1">RuBisCO catalyzes two reactions: the carboxylation of D-ribulose 1,5-bisphosphate, the primary event in carbon dioxide fixation, as well as the oxidative fragmentation of the pentose substrate. Both reactions occur simultaneously and in competition at the same active site. Although the small subunit is not catalytic it is essential for maximal activity.</text>
</comment>
<comment type="subunit">
    <text evidence="1">Heterohexadecamer of 8 large and 8 small subunits.</text>
</comment>
<comment type="interaction">
    <interactant intactId="EBI-1541681">
        <id>P10795</id>
    </interactant>
    <interactant intactId="EBI-25506855">
        <id>O23160</id>
        <label>MYB73</label>
    </interactant>
    <organismsDiffer>false</organismsDiffer>
    <experiments>3</experiments>
</comment>
<comment type="interaction">
    <interactant intactId="EBI-1541681">
        <id>P10795</id>
    </interactant>
    <interactant intactId="EBI-4426557">
        <id>Q84MB2</id>
        <label>TIFY8</label>
    </interactant>
    <organismsDiffer>false</organismsDiffer>
    <experiments>3</experiments>
</comment>
<comment type="subcellular location">
    <subcellularLocation>
        <location evidence="2">Plastid</location>
        <location evidence="2">Chloroplast membrane</location>
        <topology evidence="2">Peripheral membrane protein</topology>
    </subcellularLocation>
    <subcellularLocation>
        <location evidence="2 3">Plastid</location>
        <location evidence="2 3">Chloroplast stroma</location>
    </subcellularLocation>
</comment>
<comment type="alternative products">
    <event type="alternative splicing"/>
    <isoform>
        <id>P10795-1</id>
        <name>1</name>
        <sequence type="displayed"/>
    </isoform>
    <text>A number of isoforms are produced. According to EST sequences.</text>
</comment>
<comment type="miscellaneous">
    <text>There are four genes coding for RBS in Arabidopsis thaliana.</text>
</comment>
<comment type="miscellaneous">
    <text evidence="1">The basic functional RuBisCO is composed of a large chain homodimer in a 'head-to-tail' conformation. In form I RuBisCO this homodimer is arranged in a barrel-like tetramer with the small subunits forming a tetrameric 'cap' on each end of the 'barrel'.</text>
</comment>
<comment type="similarity">
    <text evidence="1">Belongs to the RuBisCO small chain family.</text>
</comment>
<comment type="sequence caution" evidence="4">
    <conflict type="erroneous initiation">
        <sequence resource="EMBL-CDS" id="AAK49590"/>
    </conflict>
</comment>
<comment type="sequence caution" evidence="4">
    <conflict type="erroneous gene model prediction">
        <sequence resource="EMBL-CDS" id="CAA31948"/>
    </conflict>
</comment>
<keyword id="KW-0025">Alternative splicing</keyword>
<keyword id="KW-0113">Calvin cycle</keyword>
<keyword id="KW-0120">Carbon dioxide fixation</keyword>
<keyword id="KW-0150">Chloroplast</keyword>
<keyword id="KW-0472">Membrane</keyword>
<keyword id="KW-0597">Phosphoprotein</keyword>
<keyword id="KW-0601">Photorespiration</keyword>
<keyword id="KW-0602">Photosynthesis</keyword>
<keyword id="KW-0934">Plastid</keyword>
<keyword id="KW-1185">Reference proteome</keyword>
<keyword id="KW-0809">Transit peptide</keyword>
<proteinExistence type="evidence at protein level"/>
<reference key="1">
    <citation type="journal article" date="1988" name="Plant Mol. Biol.">
        <title>Four genes in two diverged subfamilies encode the ribulose-1,5-bisphosphate carboxylase small subunit polypeptides of Arabidopsis thaliana.</title>
        <authorList>
            <person name="Krebbers E."/>
            <person name="Seurinck J."/>
            <person name="Herdies L."/>
            <person name="Cashmore A.R."/>
            <person name="Timko M.P."/>
        </authorList>
        <dbReference type="AGRICOLA" id="IND91035191"/>
    </citation>
    <scope>NUCLEOTIDE SEQUENCE</scope>
    <source>
        <strain>cv. Columbia K85</strain>
    </source>
</reference>
<reference key="2">
    <citation type="journal article" date="2000" name="Nature">
        <title>Sequence and analysis of chromosome 1 of the plant Arabidopsis thaliana.</title>
        <authorList>
            <person name="Theologis A."/>
            <person name="Ecker J.R."/>
            <person name="Palm C.J."/>
            <person name="Federspiel N.A."/>
            <person name="Kaul S."/>
            <person name="White O."/>
            <person name="Alonso J."/>
            <person name="Altafi H."/>
            <person name="Araujo R."/>
            <person name="Bowman C.L."/>
            <person name="Brooks S.Y."/>
            <person name="Buehler E."/>
            <person name="Chan A."/>
            <person name="Chao Q."/>
            <person name="Chen H."/>
            <person name="Cheuk R.F."/>
            <person name="Chin C.W."/>
            <person name="Chung M.K."/>
            <person name="Conn L."/>
            <person name="Conway A.B."/>
            <person name="Conway A.R."/>
            <person name="Creasy T.H."/>
            <person name="Dewar K."/>
            <person name="Dunn P."/>
            <person name="Etgu P."/>
            <person name="Feldblyum T.V."/>
            <person name="Feng J.-D."/>
            <person name="Fong B."/>
            <person name="Fujii C.Y."/>
            <person name="Gill J.E."/>
            <person name="Goldsmith A.D."/>
            <person name="Haas B."/>
            <person name="Hansen N.F."/>
            <person name="Hughes B."/>
            <person name="Huizar L."/>
            <person name="Hunter J.L."/>
            <person name="Jenkins J."/>
            <person name="Johnson-Hopson C."/>
            <person name="Khan S."/>
            <person name="Khaykin E."/>
            <person name="Kim C.J."/>
            <person name="Koo H.L."/>
            <person name="Kremenetskaia I."/>
            <person name="Kurtz D.B."/>
            <person name="Kwan A."/>
            <person name="Lam B."/>
            <person name="Langin-Hooper S."/>
            <person name="Lee A."/>
            <person name="Lee J.M."/>
            <person name="Lenz C.A."/>
            <person name="Li J.H."/>
            <person name="Li Y.-P."/>
            <person name="Lin X."/>
            <person name="Liu S.X."/>
            <person name="Liu Z.A."/>
            <person name="Luros J.S."/>
            <person name="Maiti R."/>
            <person name="Marziali A."/>
            <person name="Militscher J."/>
            <person name="Miranda M."/>
            <person name="Nguyen M."/>
            <person name="Nierman W.C."/>
            <person name="Osborne B.I."/>
            <person name="Pai G."/>
            <person name="Peterson J."/>
            <person name="Pham P.K."/>
            <person name="Rizzo M."/>
            <person name="Rooney T."/>
            <person name="Rowley D."/>
            <person name="Sakano H."/>
            <person name="Salzberg S.L."/>
            <person name="Schwartz J.R."/>
            <person name="Shinn P."/>
            <person name="Southwick A.M."/>
            <person name="Sun H."/>
            <person name="Tallon L.J."/>
            <person name="Tambunga G."/>
            <person name="Toriumi M.J."/>
            <person name="Town C.D."/>
            <person name="Utterback T."/>
            <person name="Van Aken S."/>
            <person name="Vaysberg M."/>
            <person name="Vysotskaia V.S."/>
            <person name="Walker M."/>
            <person name="Wu D."/>
            <person name="Yu G."/>
            <person name="Fraser C.M."/>
            <person name="Venter J.C."/>
            <person name="Davis R.W."/>
        </authorList>
    </citation>
    <scope>NUCLEOTIDE SEQUENCE [LARGE SCALE GENOMIC DNA]</scope>
    <source>
        <strain>cv. Columbia</strain>
    </source>
</reference>
<reference key="3">
    <citation type="journal article" date="2017" name="Plant J.">
        <title>Araport11: a complete reannotation of the Arabidopsis thaliana reference genome.</title>
        <authorList>
            <person name="Cheng C.Y."/>
            <person name="Krishnakumar V."/>
            <person name="Chan A.P."/>
            <person name="Thibaud-Nissen F."/>
            <person name="Schobel S."/>
            <person name="Town C.D."/>
        </authorList>
    </citation>
    <scope>GENOME REANNOTATION</scope>
    <source>
        <strain>cv. Columbia</strain>
    </source>
</reference>
<reference key="4">
    <citation type="journal article" date="2003" name="Science">
        <title>Empirical analysis of transcriptional activity in the Arabidopsis genome.</title>
        <authorList>
            <person name="Yamada K."/>
            <person name="Lim J."/>
            <person name="Dale J.M."/>
            <person name="Chen H."/>
            <person name="Shinn P."/>
            <person name="Palm C.J."/>
            <person name="Southwick A.M."/>
            <person name="Wu H.C."/>
            <person name="Kim C.J."/>
            <person name="Nguyen M."/>
            <person name="Pham P.K."/>
            <person name="Cheuk R.F."/>
            <person name="Karlin-Newmann G."/>
            <person name="Liu S.X."/>
            <person name="Lam B."/>
            <person name="Sakano H."/>
            <person name="Wu T."/>
            <person name="Yu G."/>
            <person name="Miranda M."/>
            <person name="Quach H.L."/>
            <person name="Tripp M."/>
            <person name="Chang C.H."/>
            <person name="Lee J.M."/>
            <person name="Toriumi M.J."/>
            <person name="Chan M.M."/>
            <person name="Tang C.C."/>
            <person name="Onodera C.S."/>
            <person name="Deng J.M."/>
            <person name="Akiyama K."/>
            <person name="Ansari Y."/>
            <person name="Arakawa T."/>
            <person name="Banh J."/>
            <person name="Banno F."/>
            <person name="Bowser L."/>
            <person name="Brooks S.Y."/>
            <person name="Carninci P."/>
            <person name="Chao Q."/>
            <person name="Choy N."/>
            <person name="Enju A."/>
            <person name="Goldsmith A.D."/>
            <person name="Gurjal M."/>
            <person name="Hansen N.F."/>
            <person name="Hayashizaki Y."/>
            <person name="Johnson-Hopson C."/>
            <person name="Hsuan V.W."/>
            <person name="Iida K."/>
            <person name="Karnes M."/>
            <person name="Khan S."/>
            <person name="Koesema E."/>
            <person name="Ishida J."/>
            <person name="Jiang P.X."/>
            <person name="Jones T."/>
            <person name="Kawai J."/>
            <person name="Kamiya A."/>
            <person name="Meyers C."/>
            <person name="Nakajima M."/>
            <person name="Narusaka M."/>
            <person name="Seki M."/>
            <person name="Sakurai T."/>
            <person name="Satou M."/>
            <person name="Tamse R."/>
            <person name="Vaysberg M."/>
            <person name="Wallender E.K."/>
            <person name="Wong C."/>
            <person name="Yamamura Y."/>
            <person name="Yuan S."/>
            <person name="Shinozaki K."/>
            <person name="Davis R.W."/>
            <person name="Theologis A."/>
            <person name="Ecker J.R."/>
        </authorList>
    </citation>
    <scope>NUCLEOTIDE SEQUENCE [LARGE SCALE MRNA]</scope>
    <source>
        <strain>cv. Columbia</strain>
    </source>
</reference>
<reference key="5">
    <citation type="submission" date="2006-07" db="EMBL/GenBank/DDBJ databases">
        <title>Large-scale analysis of RIKEN Arabidopsis full-length (RAFL) cDNAs.</title>
        <authorList>
            <person name="Totoki Y."/>
            <person name="Seki M."/>
            <person name="Ishida J."/>
            <person name="Nakajima M."/>
            <person name="Enju A."/>
            <person name="Kamiya A."/>
            <person name="Narusaka M."/>
            <person name="Shin-i T."/>
            <person name="Nakagawa M."/>
            <person name="Sakamoto N."/>
            <person name="Oishi K."/>
            <person name="Kohara Y."/>
            <person name="Kobayashi M."/>
            <person name="Toyoda A."/>
            <person name="Sakaki Y."/>
            <person name="Sakurai T."/>
            <person name="Iida K."/>
            <person name="Akiyama K."/>
            <person name="Satou M."/>
            <person name="Toyoda T."/>
            <person name="Konagaya A."/>
            <person name="Carninci P."/>
            <person name="Kawai J."/>
            <person name="Hayashizaki Y."/>
            <person name="Shinozaki K."/>
        </authorList>
    </citation>
    <scope>NUCLEOTIDE SEQUENCE [LARGE SCALE MRNA]</scope>
    <source>
        <strain>cv. Columbia</strain>
    </source>
</reference>
<reference key="6">
    <citation type="journal article" date="1992" name="Plant Mol. Biol.">
        <title>Arabidopsis thaliana small subunit leader and transit peptide enhance the expression of Bacillus thuringiensis proteins in transgenic plants.</title>
        <authorList>
            <person name="Wong E.Y."/>
            <person name="Hironaka C.M."/>
            <person name="Fishhoff D.A."/>
        </authorList>
    </citation>
    <scope>NUCLEOTIDE SEQUENCE OF 1-79</scope>
</reference>
<reference key="7">
    <citation type="journal article" date="2003" name="Mol. Cell. Proteomics">
        <title>Proteomics of the chloroplast envelope membranes from Arabidopsis thaliana.</title>
        <authorList>
            <person name="Ferro M."/>
            <person name="Salvi D."/>
            <person name="Brugiere S."/>
            <person name="Miras S."/>
            <person name="Kowalski S."/>
            <person name="Louwagie M."/>
            <person name="Garin J."/>
            <person name="Joyard J."/>
            <person name="Rolland N."/>
        </authorList>
    </citation>
    <scope>IDENTIFICATION BY MASS SPECTROMETRY</scope>
    <scope>SUBCELLULAR LOCATION [LARGE SCALE ANALYSIS]</scope>
    <source>
        <strain>cv. Wassilewskija</strain>
    </source>
</reference>
<reference key="8">
    <citation type="journal article" date="2009" name="Plant Physiol.">
        <title>Large-scale Arabidopsis phosphoproteome profiling reveals novel chloroplast kinase substrates and phosphorylation networks.</title>
        <authorList>
            <person name="Reiland S."/>
            <person name="Messerli G."/>
            <person name="Baerenfaller K."/>
            <person name="Gerrits B."/>
            <person name="Endler A."/>
            <person name="Grossmann J."/>
            <person name="Gruissem W."/>
            <person name="Baginsky S."/>
        </authorList>
    </citation>
    <scope>PHOSPHORYLATION [LARGE SCALE ANALYSIS] AT SER-113</scope>
    <scope>IDENTIFICATION BY MASS SPECTROMETRY [LARGE SCALE ANALYSIS]</scope>
</reference>
<reference key="9">
    <citation type="journal article" date="2012" name="Mol. Cell. Proteomics">
        <title>Comparative large-scale characterisation of plant vs. mammal proteins reveals similar and idiosyncratic N-alpha acetylation features.</title>
        <authorList>
            <person name="Bienvenut W.V."/>
            <person name="Sumpton D."/>
            <person name="Martinez A."/>
            <person name="Lilla S."/>
            <person name="Espagne C."/>
            <person name="Meinnel T."/>
            <person name="Giglione C."/>
        </authorList>
    </citation>
    <scope>IDENTIFICATION BY MASS SPECTROMETRY [LARGE SCALE ANALYSIS]</scope>
</reference>
<reference key="10">
    <citation type="journal article" date="2017" name="Sci. Rep.">
        <title>Evolution of rubisco complex small subunit transit peptides from algae to plants.</title>
        <authorList>
            <person name="Razzak M.A."/>
            <person name="Lee D.W."/>
            <person name="Yoo Y.J."/>
            <person name="Hwang I."/>
        </authorList>
    </citation>
    <scope>SUBCELLULAR LOCATION</scope>
</reference>
<accession>P10795</accession>
<accession>Q0WVH4</accession>
<accession>Q94JW2</accession>
<accession>Q9FPI6</accession>
<accession>Q9SAV4</accession>